<gene>
    <name evidence="1" type="primary">nuoD</name>
    <name type="ordered locus">AZC_1670</name>
</gene>
<proteinExistence type="inferred from homology"/>
<accession>A8I3Z3</accession>
<organism>
    <name type="scientific">Azorhizobium caulinodans (strain ATCC 43989 / DSM 5975 / JCM 20966 / LMG 6465 / NBRC 14845 / NCIMB 13405 / ORS 571)</name>
    <dbReference type="NCBI Taxonomy" id="438753"/>
    <lineage>
        <taxon>Bacteria</taxon>
        <taxon>Pseudomonadati</taxon>
        <taxon>Pseudomonadota</taxon>
        <taxon>Alphaproteobacteria</taxon>
        <taxon>Hyphomicrobiales</taxon>
        <taxon>Xanthobacteraceae</taxon>
        <taxon>Azorhizobium</taxon>
    </lineage>
</organism>
<feature type="chain" id="PRO_0000357762" description="NADH-quinone oxidoreductase subunit D">
    <location>
        <begin position="1"/>
        <end position="402"/>
    </location>
</feature>
<reference key="1">
    <citation type="submission" date="2007-04" db="EMBL/GenBank/DDBJ databases">
        <title>Complete genome sequence of the nitrogen-fixing bacterium Azorhizobium caulinodans ORS571.</title>
        <authorList>
            <person name="Lee K.B."/>
            <person name="Backer P.D."/>
            <person name="Aono T."/>
            <person name="Liu C.T."/>
            <person name="Suzuki S."/>
            <person name="Suzuki T."/>
            <person name="Kaneko T."/>
            <person name="Yamada M."/>
            <person name="Tabata S."/>
            <person name="Kupfer D.M."/>
            <person name="Najar F.Z."/>
            <person name="Wiley G.B."/>
            <person name="Roe B."/>
            <person name="Binnewies T."/>
            <person name="Ussery D."/>
            <person name="Vereecke D."/>
            <person name="Gevers D."/>
            <person name="Holsters M."/>
            <person name="Oyaizu H."/>
        </authorList>
    </citation>
    <scope>NUCLEOTIDE SEQUENCE [LARGE SCALE GENOMIC DNA]</scope>
    <source>
        <strain>ATCC 43989 / DSM 5975 / JCM 20966 / LMG 6465 / NBRC 14845 / NCIMB 13405 / ORS 571</strain>
    </source>
</reference>
<sequence>MAHTLDSQQPAVPVRNFQINFGPQHPAAHGVLRMVLELNGEVVERVDPHIGLLHRGTEKLIEAKTYLQAVPYFDRLDYCAPMNQEHAFCLAVERLAGIEVPKRGQLIRVLYSEIGRLLSHLLNVTTFAMDVGALTPPLWGFEAREKLMMFYERASGSRMHAAYFRPGGVHQDLPQKLVEDIGEFCRTFPSLLDDLDALVTGNRIFKQRTVDIGVVTLEDALAWGFSGVMVRGSGAPWDLRRAQPYECYSELDFDIPIGKHGDCYDRYVVRMEEMRQSNKIMLQCVDRLLKEAGPVASTDRKVSPPKRGEMKRSMEALIHHFKLYTEGFHVPEGEVYAAVEAPKGEFGVYLVGDGTNKPYRCKIRAPGFAHLQSMDFLCRGHMLADVSAVLGSLDIVFGEVDR</sequence>
<comment type="function">
    <text evidence="1">NDH-1 shuttles electrons from NADH, via FMN and iron-sulfur (Fe-S) centers, to quinones in the respiratory chain. The immediate electron acceptor for the enzyme in this species is believed to be ubiquinone. Couples the redox reaction to proton translocation (for every two electrons transferred, four hydrogen ions are translocated across the cytoplasmic membrane), and thus conserves the redox energy in a proton gradient.</text>
</comment>
<comment type="catalytic activity">
    <reaction evidence="1">
        <text>a quinone + NADH + 5 H(+)(in) = a quinol + NAD(+) + 4 H(+)(out)</text>
        <dbReference type="Rhea" id="RHEA:57888"/>
        <dbReference type="ChEBI" id="CHEBI:15378"/>
        <dbReference type="ChEBI" id="CHEBI:24646"/>
        <dbReference type="ChEBI" id="CHEBI:57540"/>
        <dbReference type="ChEBI" id="CHEBI:57945"/>
        <dbReference type="ChEBI" id="CHEBI:132124"/>
    </reaction>
</comment>
<comment type="subunit">
    <text evidence="1">NDH-1 is composed of 14 different subunits. Subunits NuoB, C, D, E, F, and G constitute the peripheral sector of the complex.</text>
</comment>
<comment type="subcellular location">
    <subcellularLocation>
        <location evidence="1">Cell inner membrane</location>
        <topology evidence="1">Peripheral membrane protein</topology>
        <orientation evidence="1">Cytoplasmic side</orientation>
    </subcellularLocation>
</comment>
<comment type="similarity">
    <text evidence="1">Belongs to the complex I 49 kDa subunit family.</text>
</comment>
<evidence type="ECO:0000255" key="1">
    <source>
        <dbReference type="HAMAP-Rule" id="MF_01358"/>
    </source>
</evidence>
<name>NUOD_AZOC5</name>
<dbReference type="EC" id="7.1.1.-" evidence="1"/>
<dbReference type="EMBL" id="AP009384">
    <property type="protein sequence ID" value="BAF87668.1"/>
    <property type="molecule type" value="Genomic_DNA"/>
</dbReference>
<dbReference type="RefSeq" id="WP_012170198.1">
    <property type="nucleotide sequence ID" value="NC_009937.1"/>
</dbReference>
<dbReference type="SMR" id="A8I3Z3"/>
<dbReference type="STRING" id="438753.AZC_1670"/>
<dbReference type="KEGG" id="azc:AZC_1670"/>
<dbReference type="eggNOG" id="COG0649">
    <property type="taxonomic scope" value="Bacteria"/>
</dbReference>
<dbReference type="HOGENOM" id="CLU_015134_1_1_5"/>
<dbReference type="Proteomes" id="UP000000270">
    <property type="component" value="Chromosome"/>
</dbReference>
<dbReference type="GO" id="GO:0005886">
    <property type="term" value="C:plasma membrane"/>
    <property type="evidence" value="ECO:0007669"/>
    <property type="project" value="UniProtKB-SubCell"/>
</dbReference>
<dbReference type="GO" id="GO:0051287">
    <property type="term" value="F:NAD binding"/>
    <property type="evidence" value="ECO:0007669"/>
    <property type="project" value="InterPro"/>
</dbReference>
<dbReference type="GO" id="GO:0050136">
    <property type="term" value="F:NADH:ubiquinone reductase (non-electrogenic) activity"/>
    <property type="evidence" value="ECO:0007669"/>
    <property type="project" value="UniProtKB-UniRule"/>
</dbReference>
<dbReference type="GO" id="GO:0048038">
    <property type="term" value="F:quinone binding"/>
    <property type="evidence" value="ECO:0007669"/>
    <property type="project" value="UniProtKB-KW"/>
</dbReference>
<dbReference type="FunFam" id="1.10.645.10:FF:000005">
    <property type="entry name" value="NADH-quinone oxidoreductase subunit D"/>
    <property type="match status" value="1"/>
</dbReference>
<dbReference type="Gene3D" id="1.10.645.10">
    <property type="entry name" value="Cytochrome-c3 Hydrogenase, chain B"/>
    <property type="match status" value="1"/>
</dbReference>
<dbReference type="HAMAP" id="MF_01358">
    <property type="entry name" value="NDH1_NuoD"/>
    <property type="match status" value="1"/>
</dbReference>
<dbReference type="InterPro" id="IPR001135">
    <property type="entry name" value="NADH_Q_OxRdtase_suD"/>
</dbReference>
<dbReference type="InterPro" id="IPR014029">
    <property type="entry name" value="NADH_UbQ_OxRdtase_49kDa_CS"/>
</dbReference>
<dbReference type="InterPro" id="IPR022885">
    <property type="entry name" value="NDH1_su_D/H"/>
</dbReference>
<dbReference type="InterPro" id="IPR029014">
    <property type="entry name" value="NiFe-Hase_large"/>
</dbReference>
<dbReference type="NCBIfam" id="TIGR01962">
    <property type="entry name" value="NuoD"/>
    <property type="match status" value="1"/>
</dbReference>
<dbReference type="NCBIfam" id="NF004739">
    <property type="entry name" value="PRK06075.1"/>
    <property type="match status" value="1"/>
</dbReference>
<dbReference type="PANTHER" id="PTHR11993:SF10">
    <property type="entry name" value="NADH DEHYDROGENASE [UBIQUINONE] IRON-SULFUR PROTEIN 2, MITOCHONDRIAL"/>
    <property type="match status" value="1"/>
</dbReference>
<dbReference type="PANTHER" id="PTHR11993">
    <property type="entry name" value="NADH-UBIQUINONE OXIDOREDUCTASE 49 KDA SUBUNIT"/>
    <property type="match status" value="1"/>
</dbReference>
<dbReference type="Pfam" id="PF00346">
    <property type="entry name" value="Complex1_49kDa"/>
    <property type="match status" value="1"/>
</dbReference>
<dbReference type="SUPFAM" id="SSF56762">
    <property type="entry name" value="HydB/Nqo4-like"/>
    <property type="match status" value="1"/>
</dbReference>
<dbReference type="PROSITE" id="PS00535">
    <property type="entry name" value="COMPLEX1_49K"/>
    <property type="match status" value="1"/>
</dbReference>
<protein>
    <recommendedName>
        <fullName evidence="1">NADH-quinone oxidoreductase subunit D</fullName>
        <ecNumber evidence="1">7.1.1.-</ecNumber>
    </recommendedName>
    <alternativeName>
        <fullName evidence="1">NADH dehydrogenase I subunit D</fullName>
    </alternativeName>
    <alternativeName>
        <fullName evidence="1">NDH-1 subunit D</fullName>
    </alternativeName>
</protein>
<keyword id="KW-0997">Cell inner membrane</keyword>
<keyword id="KW-1003">Cell membrane</keyword>
<keyword id="KW-0472">Membrane</keyword>
<keyword id="KW-0520">NAD</keyword>
<keyword id="KW-0874">Quinone</keyword>
<keyword id="KW-1185">Reference proteome</keyword>
<keyword id="KW-1278">Translocase</keyword>
<keyword id="KW-0813">Transport</keyword>
<keyword id="KW-0830">Ubiquinone</keyword>